<evidence type="ECO:0000250" key="1">
    <source>
        <dbReference type="UniProtKB" id="P09367"/>
    </source>
</evidence>
<evidence type="ECO:0000250" key="2">
    <source>
        <dbReference type="UniProtKB" id="P20132"/>
    </source>
</evidence>
<evidence type="ECO:0000269" key="3">
    <source ref="2"/>
</evidence>
<evidence type="ECO:0000305" key="4"/>
<accession>Q8VBT2</accession>
<dbReference type="EC" id="4.3.1.17" evidence="2"/>
<dbReference type="EC" id="4.3.1.19" evidence="2"/>
<dbReference type="EMBL" id="BC021605">
    <property type="protein sequence ID" value="AAH21605.1"/>
    <property type="molecule type" value="mRNA"/>
</dbReference>
<dbReference type="EMBL" id="BC021950">
    <property type="protein sequence ID" value="AAH21950.1"/>
    <property type="molecule type" value="mRNA"/>
</dbReference>
<dbReference type="CCDS" id="CCDS19619.1"/>
<dbReference type="RefSeq" id="NP_663540.1">
    <property type="nucleotide sequence ID" value="NM_145565.1"/>
</dbReference>
<dbReference type="SMR" id="Q8VBT2"/>
<dbReference type="FunCoup" id="Q8VBT2">
    <property type="interactions" value="882"/>
</dbReference>
<dbReference type="STRING" id="10090.ENSMUSP00000143838"/>
<dbReference type="GlyGen" id="Q8VBT2">
    <property type="glycosylation" value="1 site, 1 O-linked glycan (1 site)"/>
</dbReference>
<dbReference type="iPTMnet" id="Q8VBT2"/>
<dbReference type="PhosphoSitePlus" id="Q8VBT2"/>
<dbReference type="SwissPalm" id="Q8VBT2"/>
<dbReference type="jPOST" id="Q8VBT2"/>
<dbReference type="PaxDb" id="10090-ENSMUSP00000064849"/>
<dbReference type="ProteomicsDB" id="253433"/>
<dbReference type="Antibodypedia" id="31269">
    <property type="antibodies" value="270 antibodies from 18 providers"/>
</dbReference>
<dbReference type="DNASU" id="231691"/>
<dbReference type="Ensembl" id="ENSMUST00000066540.14">
    <property type="protein sequence ID" value="ENSMUSP00000064849.8"/>
    <property type="gene ID" value="ENSMUSG00000029597.15"/>
</dbReference>
<dbReference type="Ensembl" id="ENSMUST00000201684.4">
    <property type="protein sequence ID" value="ENSMUSP00000143838.2"/>
    <property type="gene ID" value="ENSMUSG00000029597.15"/>
</dbReference>
<dbReference type="GeneID" id="231691"/>
<dbReference type="KEGG" id="mmu:231691"/>
<dbReference type="UCSC" id="uc008zhg.1">
    <property type="organism name" value="mouse"/>
</dbReference>
<dbReference type="AGR" id="MGI:98270"/>
<dbReference type="CTD" id="10993"/>
<dbReference type="MGI" id="MGI:98270">
    <property type="gene designation" value="Sds"/>
</dbReference>
<dbReference type="VEuPathDB" id="HostDB:ENSMUSG00000029597"/>
<dbReference type="eggNOG" id="KOG1250">
    <property type="taxonomic scope" value="Eukaryota"/>
</dbReference>
<dbReference type="GeneTree" id="ENSGT00940000160172"/>
<dbReference type="InParanoid" id="Q8VBT2"/>
<dbReference type="OMA" id="AEQGCEH"/>
<dbReference type="OrthoDB" id="7773036at2759"/>
<dbReference type="PhylomeDB" id="Q8VBT2"/>
<dbReference type="TreeFam" id="TF329014"/>
<dbReference type="Reactome" id="R-MMU-8849175">
    <property type="pathway name" value="Threonine catabolism"/>
</dbReference>
<dbReference type="UniPathway" id="UPA00138"/>
<dbReference type="BioGRID-ORCS" id="231691">
    <property type="hits" value="2 hits in 80 CRISPR screens"/>
</dbReference>
<dbReference type="ChiTaRS" id="Sbds">
    <property type="organism name" value="mouse"/>
</dbReference>
<dbReference type="PRO" id="PR:Q8VBT2"/>
<dbReference type="Proteomes" id="UP000000589">
    <property type="component" value="Chromosome 5"/>
</dbReference>
<dbReference type="RNAct" id="Q8VBT2">
    <property type="molecule type" value="protein"/>
</dbReference>
<dbReference type="Bgee" id="ENSMUSG00000029597">
    <property type="expression patterns" value="Expressed in left lobe of liver and 45 other cell types or tissues"/>
</dbReference>
<dbReference type="ExpressionAtlas" id="Q8VBT2">
    <property type="expression patterns" value="baseline and differential"/>
</dbReference>
<dbReference type="GO" id="GO:0005829">
    <property type="term" value="C:cytosol"/>
    <property type="evidence" value="ECO:0007669"/>
    <property type="project" value="Ensembl"/>
</dbReference>
<dbReference type="GO" id="GO:0005739">
    <property type="term" value="C:mitochondrion"/>
    <property type="evidence" value="ECO:0007669"/>
    <property type="project" value="Ensembl"/>
</dbReference>
<dbReference type="GO" id="GO:0003941">
    <property type="term" value="F:L-serine ammonia-lyase activity"/>
    <property type="evidence" value="ECO:0007669"/>
    <property type="project" value="UniProtKB-EC"/>
</dbReference>
<dbReference type="GO" id="GO:0042803">
    <property type="term" value="F:protein homodimerization activity"/>
    <property type="evidence" value="ECO:0007669"/>
    <property type="project" value="Ensembl"/>
</dbReference>
<dbReference type="GO" id="GO:0030170">
    <property type="term" value="F:pyridoxal phosphate binding"/>
    <property type="evidence" value="ECO:0007669"/>
    <property type="project" value="Ensembl"/>
</dbReference>
<dbReference type="GO" id="GO:0004794">
    <property type="term" value="F:threonine deaminase activity"/>
    <property type="evidence" value="ECO:0007669"/>
    <property type="project" value="UniProtKB-EC"/>
</dbReference>
<dbReference type="GO" id="GO:0006094">
    <property type="term" value="P:gluconeogenesis"/>
    <property type="evidence" value="ECO:0007669"/>
    <property type="project" value="UniProtKB-UniPathway"/>
</dbReference>
<dbReference type="GO" id="GO:0006565">
    <property type="term" value="P:L-serine catabolic process"/>
    <property type="evidence" value="ECO:0007669"/>
    <property type="project" value="Ensembl"/>
</dbReference>
<dbReference type="GO" id="GO:0006629">
    <property type="term" value="P:lipid metabolic process"/>
    <property type="evidence" value="ECO:0007669"/>
    <property type="project" value="UniProtKB-KW"/>
</dbReference>
<dbReference type="GO" id="GO:0042866">
    <property type="term" value="P:pyruvate biosynthetic process"/>
    <property type="evidence" value="ECO:0007669"/>
    <property type="project" value="Ensembl"/>
</dbReference>
<dbReference type="CDD" id="cd06448">
    <property type="entry name" value="L-Ser-dehyd"/>
    <property type="match status" value="1"/>
</dbReference>
<dbReference type="FunFam" id="3.40.50.1100:FF:000031">
    <property type="entry name" value="L-serine dehydratase/L-threonine deaminase"/>
    <property type="match status" value="1"/>
</dbReference>
<dbReference type="FunFam" id="3.40.50.1100:FF:000106">
    <property type="entry name" value="L-serine dehydratase/L-threonine deaminase"/>
    <property type="match status" value="1"/>
</dbReference>
<dbReference type="Gene3D" id="3.40.50.1100">
    <property type="match status" value="2"/>
</dbReference>
<dbReference type="InterPro" id="IPR050147">
    <property type="entry name" value="Ser/Thr_Dehydratase"/>
</dbReference>
<dbReference type="InterPro" id="IPR000634">
    <property type="entry name" value="Ser/Thr_deHydtase_PyrdxlP-BS"/>
</dbReference>
<dbReference type="InterPro" id="IPR001926">
    <property type="entry name" value="TrpB-like_PALP"/>
</dbReference>
<dbReference type="InterPro" id="IPR036052">
    <property type="entry name" value="TrpB-like_PALP_sf"/>
</dbReference>
<dbReference type="PANTHER" id="PTHR48078:SF8">
    <property type="entry name" value="L-SERINE DEHYDRATASE_L-THREONINE DEAMINASE"/>
    <property type="match status" value="1"/>
</dbReference>
<dbReference type="PANTHER" id="PTHR48078">
    <property type="entry name" value="THREONINE DEHYDRATASE, MITOCHONDRIAL-RELATED"/>
    <property type="match status" value="1"/>
</dbReference>
<dbReference type="Pfam" id="PF00291">
    <property type="entry name" value="PALP"/>
    <property type="match status" value="1"/>
</dbReference>
<dbReference type="SUPFAM" id="SSF53686">
    <property type="entry name" value="Tryptophan synthase beta subunit-like PLP-dependent enzymes"/>
    <property type="match status" value="1"/>
</dbReference>
<dbReference type="PROSITE" id="PS00165">
    <property type="entry name" value="DEHYDRATASE_SER_THR"/>
    <property type="match status" value="1"/>
</dbReference>
<proteinExistence type="evidence at protein level"/>
<feature type="initiator methionine" description="Removed" evidence="3">
    <location>
        <position position="1"/>
    </location>
</feature>
<feature type="chain" id="PRO_0000185595" description="L-serine dehydratase/L-threonine deaminase">
    <location>
        <begin position="2"/>
        <end position="327"/>
    </location>
</feature>
<feature type="binding site" evidence="2">
    <location>
        <position position="128"/>
    </location>
    <ligand>
        <name>pyridoxal 5'-phosphate</name>
        <dbReference type="ChEBI" id="CHEBI:597326"/>
    </ligand>
</feature>
<feature type="modified residue" description="N-acetylalanine" evidence="3">
    <location>
        <position position="2"/>
    </location>
</feature>
<feature type="modified residue" description="N6-(pyridoxal phosphate)lysine" evidence="2">
    <location>
        <position position="41"/>
    </location>
</feature>
<protein>
    <recommendedName>
        <fullName>L-serine dehydratase/L-threonine deaminase</fullName>
        <shortName>SDH</shortName>
        <ecNumber evidence="2">4.3.1.17</ecNumber>
    </recommendedName>
    <alternativeName>
        <fullName>L-serine deaminase</fullName>
    </alternativeName>
    <alternativeName>
        <fullName>L-threonine dehydratase</fullName>
        <shortName>TDH</shortName>
        <ecNumber evidence="2">4.3.1.19</ecNumber>
    </alternativeName>
</protein>
<organism>
    <name type="scientific">Mus musculus</name>
    <name type="common">Mouse</name>
    <dbReference type="NCBI Taxonomy" id="10090"/>
    <lineage>
        <taxon>Eukaryota</taxon>
        <taxon>Metazoa</taxon>
        <taxon>Chordata</taxon>
        <taxon>Craniata</taxon>
        <taxon>Vertebrata</taxon>
        <taxon>Euteleostomi</taxon>
        <taxon>Mammalia</taxon>
        <taxon>Eutheria</taxon>
        <taxon>Euarchontoglires</taxon>
        <taxon>Glires</taxon>
        <taxon>Rodentia</taxon>
        <taxon>Myomorpha</taxon>
        <taxon>Muroidea</taxon>
        <taxon>Muridae</taxon>
        <taxon>Murinae</taxon>
        <taxon>Mus</taxon>
        <taxon>Mus</taxon>
    </lineage>
</organism>
<gene>
    <name type="primary">Sds</name>
</gene>
<sequence>MAAQESLHVKTPLRDSMALSKLAGTSVFLKMDSSQPSGSFKIRGIGHLCKMKAKQGCRHFVCSSAGNAGMATAYAARRLGIPATIVVPNTTPALTIERLKNEGATVEVVGEMLDEAIQVAKALEKNNPGWVYISPFDDPLIWEGHTSLVKELKETLSAKPGAIVLSVGGGGLLCGVVQGLREVGWEDVPIIAMETFGAHSFHAAIKEGKLVTLPKITSVAKALGVNTVGAQTLKLFYEHPIFSEVISDQEAVSALEKFVDDEKILVEPACGAALAAVYSRVVCRLQDEGRLQTPLASLVVIVCGGSNISLAQLQALKVQLGLNGLPE</sequence>
<reference key="1">
    <citation type="journal article" date="2004" name="Genome Res.">
        <title>The status, quality, and expansion of the NIH full-length cDNA project: the Mammalian Gene Collection (MGC).</title>
        <authorList>
            <consortium name="The MGC Project Team"/>
        </authorList>
    </citation>
    <scope>NUCLEOTIDE SEQUENCE [LARGE SCALE MRNA]</scope>
    <source>
        <strain>FVB/N</strain>
        <tissue>Liver</tissue>
    </source>
</reference>
<reference key="2">
    <citation type="submission" date="2005-07" db="UniProtKB">
        <authorList>
            <person name="Bienvenut W.V."/>
        </authorList>
    </citation>
    <scope>PROTEIN SEQUENCE OF 2-10 AND 235-257</scope>
    <scope>CLEAVAGE OF INITIATOR METHIONINE</scope>
    <scope>ACETYLATION AT ALA-2</scope>
    <scope>IDENTIFICATION BY MASS SPECTROMETRY</scope>
    <source>
        <strain>C57BL/6J</strain>
        <tissue>Liver</tissue>
    </source>
</reference>
<reference key="3">
    <citation type="journal article" date="2010" name="Cell">
        <title>A tissue-specific atlas of mouse protein phosphorylation and expression.</title>
        <authorList>
            <person name="Huttlin E.L."/>
            <person name="Jedrychowski M.P."/>
            <person name="Elias J.E."/>
            <person name="Goswami T."/>
            <person name="Rad R."/>
            <person name="Beausoleil S.A."/>
            <person name="Villen J."/>
            <person name="Haas W."/>
            <person name="Sowa M.E."/>
            <person name="Gygi S.P."/>
        </authorList>
    </citation>
    <scope>IDENTIFICATION BY MASS SPECTROMETRY [LARGE SCALE ANALYSIS]</scope>
    <source>
        <tissue>Liver</tissue>
    </source>
</reference>
<name>SDHL_MOUSE</name>
<keyword id="KW-0007">Acetylation</keyword>
<keyword id="KW-0963">Cytoplasm</keyword>
<keyword id="KW-0903">Direct protein sequencing</keyword>
<keyword id="KW-0312">Gluconeogenesis</keyword>
<keyword id="KW-0443">Lipid metabolism</keyword>
<keyword id="KW-0456">Lyase</keyword>
<keyword id="KW-0663">Pyridoxal phosphate</keyword>
<keyword id="KW-1185">Reference proteome</keyword>
<comment type="function">
    <text evidence="2">Catalyzes the pyridoxal-phosphate-dependent dehydrative deamination of L-threonine and L-serine to ammonia and alpha-ketobutyrate and pyruvate, respectively.</text>
</comment>
<comment type="catalytic activity">
    <reaction evidence="2">
        <text>L-serine = pyruvate + NH4(+)</text>
        <dbReference type="Rhea" id="RHEA:19169"/>
        <dbReference type="ChEBI" id="CHEBI:15361"/>
        <dbReference type="ChEBI" id="CHEBI:28938"/>
        <dbReference type="ChEBI" id="CHEBI:33384"/>
        <dbReference type="EC" id="4.3.1.17"/>
    </reaction>
</comment>
<comment type="catalytic activity">
    <reaction evidence="2">
        <text>L-threonine = 2-oxobutanoate + NH4(+)</text>
        <dbReference type="Rhea" id="RHEA:22108"/>
        <dbReference type="ChEBI" id="CHEBI:16763"/>
        <dbReference type="ChEBI" id="CHEBI:28938"/>
        <dbReference type="ChEBI" id="CHEBI:57926"/>
        <dbReference type="EC" id="4.3.1.19"/>
    </reaction>
</comment>
<comment type="cofactor">
    <cofactor evidence="2">
        <name>pyridoxal 5'-phosphate</name>
        <dbReference type="ChEBI" id="CHEBI:597326"/>
    </cofactor>
</comment>
<comment type="pathway">
    <text>Carbohydrate biosynthesis; gluconeogenesis.</text>
</comment>
<comment type="subunit">
    <text evidence="2">Homodimer.</text>
</comment>
<comment type="subcellular location">
    <subcellularLocation>
        <location evidence="1">Cytoplasm</location>
    </subcellularLocation>
</comment>
<comment type="similarity">
    <text evidence="4">Belongs to the serine/threonine dehydratase family.</text>
</comment>